<protein>
    <recommendedName>
        <fullName evidence="1">Bifunctional purine biosynthesis protein PurH</fullName>
    </recommendedName>
    <domain>
        <recommendedName>
            <fullName evidence="1">Phosphoribosylaminoimidazolecarboxamide formyltransferase</fullName>
            <ecNumber evidence="1">2.1.2.3</ecNumber>
        </recommendedName>
        <alternativeName>
            <fullName evidence="1">AICAR transformylase</fullName>
        </alternativeName>
    </domain>
    <domain>
        <recommendedName>
            <fullName evidence="1">IMP cyclohydrolase</fullName>
            <ecNumber evidence="1">3.5.4.10</ecNumber>
        </recommendedName>
        <alternativeName>
            <fullName evidence="1">ATIC</fullName>
        </alternativeName>
        <alternativeName>
            <fullName evidence="1">IMP synthase</fullName>
        </alternativeName>
        <alternativeName>
            <fullName evidence="1">Inosinicase</fullName>
        </alternativeName>
    </domain>
</protein>
<feature type="chain" id="PRO_1000018883" description="Bifunctional purine biosynthesis protein PurH">
    <location>
        <begin position="1"/>
        <end position="533"/>
    </location>
</feature>
<feature type="domain" description="MGS-like" evidence="2">
    <location>
        <begin position="1"/>
        <end position="148"/>
    </location>
</feature>
<name>PUR9_COLP3</name>
<comment type="catalytic activity">
    <reaction evidence="1">
        <text>(6R)-10-formyltetrahydrofolate + 5-amino-1-(5-phospho-beta-D-ribosyl)imidazole-4-carboxamide = 5-formamido-1-(5-phospho-D-ribosyl)imidazole-4-carboxamide + (6S)-5,6,7,8-tetrahydrofolate</text>
        <dbReference type="Rhea" id="RHEA:22192"/>
        <dbReference type="ChEBI" id="CHEBI:57453"/>
        <dbReference type="ChEBI" id="CHEBI:58467"/>
        <dbReference type="ChEBI" id="CHEBI:58475"/>
        <dbReference type="ChEBI" id="CHEBI:195366"/>
        <dbReference type="EC" id="2.1.2.3"/>
    </reaction>
</comment>
<comment type="catalytic activity">
    <reaction evidence="1">
        <text>IMP + H2O = 5-formamido-1-(5-phospho-D-ribosyl)imidazole-4-carboxamide</text>
        <dbReference type="Rhea" id="RHEA:18445"/>
        <dbReference type="ChEBI" id="CHEBI:15377"/>
        <dbReference type="ChEBI" id="CHEBI:58053"/>
        <dbReference type="ChEBI" id="CHEBI:58467"/>
        <dbReference type="EC" id="3.5.4.10"/>
    </reaction>
</comment>
<comment type="pathway">
    <text evidence="1">Purine metabolism; IMP biosynthesis via de novo pathway; 5-formamido-1-(5-phospho-D-ribosyl)imidazole-4-carboxamide from 5-amino-1-(5-phospho-D-ribosyl)imidazole-4-carboxamide (10-formyl THF route): step 1/1.</text>
</comment>
<comment type="pathway">
    <text evidence="1">Purine metabolism; IMP biosynthesis via de novo pathway; IMP from 5-formamido-1-(5-phospho-D-ribosyl)imidazole-4-carboxamide: step 1/1.</text>
</comment>
<comment type="domain">
    <text evidence="1">The IMP cyclohydrolase activity resides in the N-terminal region.</text>
</comment>
<comment type="similarity">
    <text evidence="1">Belongs to the PurH family.</text>
</comment>
<organism>
    <name type="scientific">Colwellia psychrerythraea (strain 34H / ATCC BAA-681)</name>
    <name type="common">Vibrio psychroerythus</name>
    <dbReference type="NCBI Taxonomy" id="167879"/>
    <lineage>
        <taxon>Bacteria</taxon>
        <taxon>Pseudomonadati</taxon>
        <taxon>Pseudomonadota</taxon>
        <taxon>Gammaproteobacteria</taxon>
        <taxon>Alteromonadales</taxon>
        <taxon>Colwelliaceae</taxon>
        <taxon>Colwellia</taxon>
    </lineage>
</organism>
<reference key="1">
    <citation type="journal article" date="2005" name="Proc. Natl. Acad. Sci. U.S.A.">
        <title>The psychrophilic lifestyle as revealed by the genome sequence of Colwellia psychrerythraea 34H through genomic and proteomic analyses.</title>
        <authorList>
            <person name="Methe B.A."/>
            <person name="Nelson K.E."/>
            <person name="Deming J.W."/>
            <person name="Momen B."/>
            <person name="Melamud E."/>
            <person name="Zhang X."/>
            <person name="Moult J."/>
            <person name="Madupu R."/>
            <person name="Nelson W.C."/>
            <person name="Dodson R.J."/>
            <person name="Brinkac L.M."/>
            <person name="Daugherty S.C."/>
            <person name="Durkin A.S."/>
            <person name="DeBoy R.T."/>
            <person name="Kolonay J.F."/>
            <person name="Sullivan S.A."/>
            <person name="Zhou L."/>
            <person name="Davidsen T.M."/>
            <person name="Wu M."/>
            <person name="Huston A.L."/>
            <person name="Lewis M."/>
            <person name="Weaver B."/>
            <person name="Weidman J.F."/>
            <person name="Khouri H."/>
            <person name="Utterback T.R."/>
            <person name="Feldblyum T.V."/>
            <person name="Fraser C.M."/>
        </authorList>
    </citation>
    <scope>NUCLEOTIDE SEQUENCE [LARGE SCALE GENOMIC DNA]</scope>
    <source>
        <strain>34H / ATCC BAA-681</strain>
    </source>
</reference>
<dbReference type="EC" id="2.1.2.3" evidence="1"/>
<dbReference type="EC" id="3.5.4.10" evidence="1"/>
<dbReference type="EMBL" id="CP000083">
    <property type="protein sequence ID" value="AAZ28762.1"/>
    <property type="molecule type" value="Genomic_DNA"/>
</dbReference>
<dbReference type="RefSeq" id="WP_011041413.1">
    <property type="nucleotide sequence ID" value="NC_003910.7"/>
</dbReference>
<dbReference type="SMR" id="Q489F4"/>
<dbReference type="STRING" id="167879.CPS_0552"/>
<dbReference type="KEGG" id="cps:CPS_0552"/>
<dbReference type="eggNOG" id="COG0138">
    <property type="taxonomic scope" value="Bacteria"/>
</dbReference>
<dbReference type="HOGENOM" id="CLU_016316_5_2_6"/>
<dbReference type="UniPathway" id="UPA00074">
    <property type="reaction ID" value="UER00133"/>
</dbReference>
<dbReference type="UniPathway" id="UPA00074">
    <property type="reaction ID" value="UER00135"/>
</dbReference>
<dbReference type="Proteomes" id="UP000000547">
    <property type="component" value="Chromosome"/>
</dbReference>
<dbReference type="GO" id="GO:0005829">
    <property type="term" value="C:cytosol"/>
    <property type="evidence" value="ECO:0007669"/>
    <property type="project" value="TreeGrafter"/>
</dbReference>
<dbReference type="GO" id="GO:0003937">
    <property type="term" value="F:IMP cyclohydrolase activity"/>
    <property type="evidence" value="ECO:0007669"/>
    <property type="project" value="UniProtKB-UniRule"/>
</dbReference>
<dbReference type="GO" id="GO:0004643">
    <property type="term" value="F:phosphoribosylaminoimidazolecarboxamide formyltransferase activity"/>
    <property type="evidence" value="ECO:0007669"/>
    <property type="project" value="UniProtKB-UniRule"/>
</dbReference>
<dbReference type="GO" id="GO:0006189">
    <property type="term" value="P:'de novo' IMP biosynthetic process"/>
    <property type="evidence" value="ECO:0007669"/>
    <property type="project" value="UniProtKB-UniRule"/>
</dbReference>
<dbReference type="CDD" id="cd01421">
    <property type="entry name" value="IMPCH"/>
    <property type="match status" value="1"/>
</dbReference>
<dbReference type="FunFam" id="3.40.140.20:FF:000001">
    <property type="entry name" value="Bifunctional purine biosynthesis protein PurH"/>
    <property type="match status" value="1"/>
</dbReference>
<dbReference type="FunFam" id="3.40.140.20:FF:000002">
    <property type="entry name" value="Bifunctional purine biosynthesis protein PurH"/>
    <property type="match status" value="1"/>
</dbReference>
<dbReference type="FunFam" id="3.40.50.1380:FF:000001">
    <property type="entry name" value="Bifunctional purine biosynthesis protein PurH"/>
    <property type="match status" value="1"/>
</dbReference>
<dbReference type="Gene3D" id="3.40.140.20">
    <property type="match status" value="2"/>
</dbReference>
<dbReference type="Gene3D" id="3.40.50.1380">
    <property type="entry name" value="Methylglyoxal synthase-like domain"/>
    <property type="match status" value="1"/>
</dbReference>
<dbReference type="HAMAP" id="MF_00139">
    <property type="entry name" value="PurH"/>
    <property type="match status" value="1"/>
</dbReference>
<dbReference type="InterPro" id="IPR024051">
    <property type="entry name" value="AICAR_Tfase_dup_dom_sf"/>
</dbReference>
<dbReference type="InterPro" id="IPR016193">
    <property type="entry name" value="Cytidine_deaminase-like"/>
</dbReference>
<dbReference type="InterPro" id="IPR011607">
    <property type="entry name" value="MGS-like_dom"/>
</dbReference>
<dbReference type="InterPro" id="IPR036914">
    <property type="entry name" value="MGS-like_dom_sf"/>
</dbReference>
<dbReference type="InterPro" id="IPR002695">
    <property type="entry name" value="PurH-like"/>
</dbReference>
<dbReference type="NCBIfam" id="NF002049">
    <property type="entry name" value="PRK00881.1"/>
    <property type="match status" value="1"/>
</dbReference>
<dbReference type="NCBIfam" id="TIGR00355">
    <property type="entry name" value="purH"/>
    <property type="match status" value="1"/>
</dbReference>
<dbReference type="PANTHER" id="PTHR11692:SF0">
    <property type="entry name" value="BIFUNCTIONAL PURINE BIOSYNTHESIS PROTEIN ATIC"/>
    <property type="match status" value="1"/>
</dbReference>
<dbReference type="PANTHER" id="PTHR11692">
    <property type="entry name" value="BIFUNCTIONAL PURINE BIOSYNTHESIS PROTEIN PURH"/>
    <property type="match status" value="1"/>
</dbReference>
<dbReference type="Pfam" id="PF01808">
    <property type="entry name" value="AICARFT_IMPCHas"/>
    <property type="match status" value="1"/>
</dbReference>
<dbReference type="Pfam" id="PF02142">
    <property type="entry name" value="MGS"/>
    <property type="match status" value="1"/>
</dbReference>
<dbReference type="PIRSF" id="PIRSF000414">
    <property type="entry name" value="AICARFT_IMPCHas"/>
    <property type="match status" value="1"/>
</dbReference>
<dbReference type="SMART" id="SM00798">
    <property type="entry name" value="AICARFT_IMPCHas"/>
    <property type="match status" value="1"/>
</dbReference>
<dbReference type="SMART" id="SM00851">
    <property type="entry name" value="MGS"/>
    <property type="match status" value="1"/>
</dbReference>
<dbReference type="SUPFAM" id="SSF53927">
    <property type="entry name" value="Cytidine deaminase-like"/>
    <property type="match status" value="1"/>
</dbReference>
<dbReference type="SUPFAM" id="SSF52335">
    <property type="entry name" value="Methylglyoxal synthase-like"/>
    <property type="match status" value="1"/>
</dbReference>
<dbReference type="PROSITE" id="PS51855">
    <property type="entry name" value="MGS"/>
    <property type="match status" value="1"/>
</dbReference>
<sequence>MDTPRPIKRALLSVSDKAGIVEFAQRLSEKGVDLLSTGGTAKLLAENGIKVTEVSDYTGHPEIMDGRVKTLHPKVHGGILARRGIDEVVMDENGISAIDMVVVNLYPFANAVSDENCSLENAIENIDIGGPTMVRAAAKNHKDVTIVVNASDYERVLTELDNNNDSLTYKTRFDLAIAAYEHTASYDGMIANYFGKMLPAYGETESKASLENKVKFPRTFNSQFIKTQDLRYGENSHQDAAFYKEENPEEASVSTATQLQGKALSYNNIADTDAALECVKEFDEPACVIVKHANPCGVAIGDDILAAYEGAYKTDPTSAFGGIIAFNRELDADTAEAIVSRQFVEVIIAPSVSDAAAQIVAAKPNLRLLECGQWDNKTTGFDFKRVNGGLLVQDTDQGRVTSDDLTVVTKRQPTDEEMRDLQFCWKVAKFVKSNAIVYVKNSSTIGVGAGQMSRVYSAKVAGIKAADENLEVKGSVMASDAFFPFRDGLDAAAEAGITAVIQPGGSMRDDEVIAAADEHNIAMVFTGMRHFRH</sequence>
<gene>
    <name evidence="1" type="primary">purH</name>
    <name type="ordered locus">CPS_0552</name>
</gene>
<proteinExistence type="inferred from homology"/>
<evidence type="ECO:0000255" key="1">
    <source>
        <dbReference type="HAMAP-Rule" id="MF_00139"/>
    </source>
</evidence>
<evidence type="ECO:0000255" key="2">
    <source>
        <dbReference type="PROSITE-ProRule" id="PRU01202"/>
    </source>
</evidence>
<accession>Q489F4</accession>
<keyword id="KW-0378">Hydrolase</keyword>
<keyword id="KW-0511">Multifunctional enzyme</keyword>
<keyword id="KW-0658">Purine biosynthesis</keyword>
<keyword id="KW-0808">Transferase</keyword>